<protein>
    <recommendedName>
        <fullName>Vacuolar protein sorting-associated protein 27</fullName>
    </recommendedName>
</protein>
<accession>Q2GS33</accession>
<feature type="chain" id="PRO_0000292513" description="Vacuolar protein sorting-associated protein 27">
    <location>
        <begin position="1"/>
        <end position="737"/>
    </location>
</feature>
<feature type="domain" description="VHS" evidence="4">
    <location>
        <begin position="18"/>
        <end position="150"/>
    </location>
</feature>
<feature type="domain" description="UIM 1" evidence="3">
    <location>
        <begin position="267"/>
        <end position="286"/>
    </location>
</feature>
<feature type="domain" description="UIM 2" evidence="3">
    <location>
        <begin position="317"/>
        <end position="336"/>
    </location>
</feature>
<feature type="zinc finger region" description="FYVE-type; degenerate" evidence="2">
    <location>
        <begin position="168"/>
        <end position="228"/>
    </location>
</feature>
<feature type="region of interest" description="Disordered" evidence="5">
    <location>
        <begin position="229"/>
        <end position="265"/>
    </location>
</feature>
<feature type="region of interest" description="Disordered" evidence="5">
    <location>
        <begin position="285"/>
        <end position="319"/>
    </location>
</feature>
<feature type="region of interest" description="Disordered" evidence="5">
    <location>
        <begin position="332"/>
        <end position="364"/>
    </location>
</feature>
<feature type="region of interest" description="Disordered" evidence="5">
    <location>
        <begin position="461"/>
        <end position="737"/>
    </location>
</feature>
<feature type="compositionally biased region" description="Polar residues" evidence="5">
    <location>
        <begin position="243"/>
        <end position="259"/>
    </location>
</feature>
<feature type="compositionally biased region" description="Polar residues" evidence="5">
    <location>
        <begin position="294"/>
        <end position="305"/>
    </location>
</feature>
<feature type="compositionally biased region" description="Low complexity" evidence="5">
    <location>
        <begin position="341"/>
        <end position="364"/>
    </location>
</feature>
<feature type="compositionally biased region" description="Pro residues" evidence="5">
    <location>
        <begin position="465"/>
        <end position="486"/>
    </location>
</feature>
<feature type="compositionally biased region" description="Polar residues" evidence="5">
    <location>
        <begin position="528"/>
        <end position="560"/>
    </location>
</feature>
<feature type="compositionally biased region" description="Polar residues" evidence="5">
    <location>
        <begin position="568"/>
        <end position="578"/>
    </location>
</feature>
<feature type="compositionally biased region" description="Polar residues" evidence="5">
    <location>
        <begin position="592"/>
        <end position="609"/>
    </location>
</feature>
<feature type="compositionally biased region" description="Low complexity" evidence="5">
    <location>
        <begin position="610"/>
        <end position="631"/>
    </location>
</feature>
<feature type="compositionally biased region" description="Low complexity" evidence="5">
    <location>
        <begin position="660"/>
        <end position="685"/>
    </location>
</feature>
<feature type="compositionally biased region" description="Polar residues" evidence="5">
    <location>
        <begin position="686"/>
        <end position="697"/>
    </location>
</feature>
<sequence>MMGWWSSGANNALDEQIDKATSSSLEDIALNLEISDIIRSKTVQPKEAMRSLKKRINNKNPNTQLSALNLTDTCVKNGGAHFLAEIASREFMESLVSLLKAVGPGTVNAEVRAKILELIQSWATAAEGRYELGYIGEVYKTLQREGYQFPPRVTVASSMIDSNAPPEWVDSDVCMRCRTAFTFTNRKHHCRNCGNCFDQQCSTKSLPLPHLGILQAVRVDDGCYAKLTDKSSKASGAPPERSFTYSSSPAKPKGSSMQPRNARVDDGFDEDLKKALAMSLEEVKSHSRGYVSSPAANGVTSNQPKPNGHAAPKAVEEEDEDLKAAIAASLADMEEQKKQHAAALKQQASGAASSSSAAPSALPKNDYELTPLEAENINLFSTLVDRLQTQPPGTILREPQIQELYDSIGALRPKLARTYGETMSKHDTLLDLHARLSTVVRYYDRMLEERLSKAYSQHSIGGYNLPPPRQAPGPYPSLQPNAPPAAGPAENFYTGEQQQEYSHPTTHQPYPQPTLAQYGAYDKRGSVSAPSSNQYPPQQVPQHTGNWGPASSAQQYGQQPSYPPNEPPQTAQLQQTPNPAHLSAPAPAPNDSIGTTPTADPSASFYFSSQAQQQQQQQQQQQQQQQQQPQQVPSSPPDPNMSPYPNLAQPLHSYQPSLPQTPASIPAQPSQPQQAHQAPPQAQQPYWQHSAAQQTQLPPVWQPPPSAAYAGYTQESFPSAPHHAPKQPVVEESLIDL</sequence>
<organism>
    <name type="scientific">Chaetomium globosum (strain ATCC 6205 / CBS 148.51 / DSM 1962 / NBRC 6347 / NRRL 1970)</name>
    <name type="common">Soil fungus</name>
    <dbReference type="NCBI Taxonomy" id="306901"/>
    <lineage>
        <taxon>Eukaryota</taxon>
        <taxon>Fungi</taxon>
        <taxon>Dikarya</taxon>
        <taxon>Ascomycota</taxon>
        <taxon>Pezizomycotina</taxon>
        <taxon>Sordariomycetes</taxon>
        <taxon>Sordariomycetidae</taxon>
        <taxon>Sordariales</taxon>
        <taxon>Chaetomiaceae</taxon>
        <taxon>Chaetomium</taxon>
    </lineage>
</organism>
<evidence type="ECO:0000250" key="1"/>
<evidence type="ECO:0000255" key="2">
    <source>
        <dbReference type="PROSITE-ProRule" id="PRU00091"/>
    </source>
</evidence>
<evidence type="ECO:0000255" key="3">
    <source>
        <dbReference type="PROSITE-ProRule" id="PRU00213"/>
    </source>
</evidence>
<evidence type="ECO:0000255" key="4">
    <source>
        <dbReference type="PROSITE-ProRule" id="PRU00218"/>
    </source>
</evidence>
<evidence type="ECO:0000256" key="5">
    <source>
        <dbReference type="SAM" id="MobiDB-lite"/>
    </source>
</evidence>
<evidence type="ECO:0000305" key="6"/>
<dbReference type="EMBL" id="CH408034">
    <property type="protein sequence ID" value="EAQ85207.1"/>
    <property type="status" value="ALT_SEQ"/>
    <property type="molecule type" value="Genomic_DNA"/>
</dbReference>
<dbReference type="RefSeq" id="XP_001227148.1">
    <property type="nucleotide sequence ID" value="XM_001227147.1"/>
</dbReference>
<dbReference type="SMR" id="Q2GS33"/>
<dbReference type="FunCoup" id="Q2GS33">
    <property type="interactions" value="88"/>
</dbReference>
<dbReference type="STRING" id="306901.Q2GS33"/>
<dbReference type="GeneID" id="4394663"/>
<dbReference type="VEuPathDB" id="FungiDB:CHGG_09221"/>
<dbReference type="HOGENOM" id="CLU_011862_1_0_1"/>
<dbReference type="InParanoid" id="Q2GS33"/>
<dbReference type="OrthoDB" id="957735at2759"/>
<dbReference type="Proteomes" id="UP000001056">
    <property type="component" value="Unassembled WGS sequence"/>
</dbReference>
<dbReference type="GO" id="GO:0010008">
    <property type="term" value="C:endosome membrane"/>
    <property type="evidence" value="ECO:0007669"/>
    <property type="project" value="UniProtKB-SubCell"/>
</dbReference>
<dbReference type="GO" id="GO:0033565">
    <property type="term" value="C:ESCRT-0 complex"/>
    <property type="evidence" value="ECO:0007669"/>
    <property type="project" value="TreeGrafter"/>
</dbReference>
<dbReference type="GO" id="GO:0032266">
    <property type="term" value="F:phosphatidylinositol-3-phosphate binding"/>
    <property type="evidence" value="ECO:0007669"/>
    <property type="project" value="TreeGrafter"/>
</dbReference>
<dbReference type="GO" id="GO:0043130">
    <property type="term" value="F:ubiquitin binding"/>
    <property type="evidence" value="ECO:0007669"/>
    <property type="project" value="InterPro"/>
</dbReference>
<dbReference type="GO" id="GO:0008270">
    <property type="term" value="F:zinc ion binding"/>
    <property type="evidence" value="ECO:0007669"/>
    <property type="project" value="UniProtKB-KW"/>
</dbReference>
<dbReference type="GO" id="GO:0006623">
    <property type="term" value="P:protein targeting to vacuole"/>
    <property type="evidence" value="ECO:0007669"/>
    <property type="project" value="TreeGrafter"/>
</dbReference>
<dbReference type="GO" id="GO:0043328">
    <property type="term" value="P:protein transport to vacuole involved in ubiquitin-dependent protein catabolic process via the multivesicular body sorting pathway"/>
    <property type="evidence" value="ECO:0007669"/>
    <property type="project" value="TreeGrafter"/>
</dbReference>
<dbReference type="CDD" id="cd15735">
    <property type="entry name" value="FYVE_spVPS27p_like"/>
    <property type="match status" value="1"/>
</dbReference>
<dbReference type="CDD" id="cd21385">
    <property type="entry name" value="GAT_Vps27"/>
    <property type="match status" value="1"/>
</dbReference>
<dbReference type="CDD" id="cd16979">
    <property type="entry name" value="VHS_Vps27"/>
    <property type="match status" value="1"/>
</dbReference>
<dbReference type="FunFam" id="1.20.5.1940:FF:000001">
    <property type="entry name" value="Vacuolar protein sorting-associated protein 27"/>
    <property type="match status" value="1"/>
</dbReference>
<dbReference type="FunFam" id="1.25.40.90:FF:000031">
    <property type="entry name" value="Vacuolar protein sorting-associated protein 27"/>
    <property type="match status" value="1"/>
</dbReference>
<dbReference type="FunFam" id="3.30.40.10:FF:000161">
    <property type="entry name" value="Vacuolar protein sorting-associated protein 27"/>
    <property type="match status" value="1"/>
</dbReference>
<dbReference type="Gene3D" id="1.20.5.1940">
    <property type="match status" value="1"/>
</dbReference>
<dbReference type="Gene3D" id="1.25.40.90">
    <property type="match status" value="1"/>
</dbReference>
<dbReference type="Gene3D" id="6.10.140.100">
    <property type="match status" value="1"/>
</dbReference>
<dbReference type="Gene3D" id="3.30.40.10">
    <property type="entry name" value="Zinc/RING finger domain, C3HC4 (zinc finger)"/>
    <property type="match status" value="1"/>
</dbReference>
<dbReference type="InterPro" id="IPR008942">
    <property type="entry name" value="ENTH_VHS"/>
</dbReference>
<dbReference type="InterPro" id="IPR017073">
    <property type="entry name" value="HGS/VPS27"/>
</dbReference>
<dbReference type="InterPro" id="IPR003903">
    <property type="entry name" value="UIM_dom"/>
</dbReference>
<dbReference type="InterPro" id="IPR002014">
    <property type="entry name" value="VHS_dom"/>
</dbReference>
<dbReference type="InterPro" id="IPR049425">
    <property type="entry name" value="Vps27_GAT-like"/>
</dbReference>
<dbReference type="InterPro" id="IPR000306">
    <property type="entry name" value="Znf_FYVE"/>
</dbReference>
<dbReference type="InterPro" id="IPR017455">
    <property type="entry name" value="Znf_FYVE-rel"/>
</dbReference>
<dbReference type="InterPro" id="IPR011011">
    <property type="entry name" value="Znf_FYVE_PHD"/>
</dbReference>
<dbReference type="InterPro" id="IPR013083">
    <property type="entry name" value="Znf_RING/FYVE/PHD"/>
</dbReference>
<dbReference type="PANTHER" id="PTHR47794">
    <property type="entry name" value="VACUOLAR PROTEIN SORTING-ASSOCIATED PROTEIN 27"/>
    <property type="match status" value="1"/>
</dbReference>
<dbReference type="PANTHER" id="PTHR47794:SF1">
    <property type="entry name" value="VACUOLAR PROTEIN SORTING-ASSOCIATED PROTEIN 27"/>
    <property type="match status" value="1"/>
</dbReference>
<dbReference type="Pfam" id="PF01363">
    <property type="entry name" value="FYVE"/>
    <property type="match status" value="1"/>
</dbReference>
<dbReference type="Pfam" id="PF02809">
    <property type="entry name" value="UIM"/>
    <property type="match status" value="2"/>
</dbReference>
<dbReference type="Pfam" id="PF00790">
    <property type="entry name" value="VHS"/>
    <property type="match status" value="1"/>
</dbReference>
<dbReference type="Pfam" id="PF21356">
    <property type="entry name" value="Vps27_GAT-like"/>
    <property type="match status" value="1"/>
</dbReference>
<dbReference type="PIRSF" id="PIRSF036956">
    <property type="entry name" value="Hrs_Vps27"/>
    <property type="match status" value="1"/>
</dbReference>
<dbReference type="SMART" id="SM00064">
    <property type="entry name" value="FYVE"/>
    <property type="match status" value="1"/>
</dbReference>
<dbReference type="SMART" id="SM00726">
    <property type="entry name" value="UIM"/>
    <property type="match status" value="2"/>
</dbReference>
<dbReference type="SMART" id="SM00288">
    <property type="entry name" value="VHS"/>
    <property type="match status" value="1"/>
</dbReference>
<dbReference type="SUPFAM" id="SSF48464">
    <property type="entry name" value="ENTH/VHS domain"/>
    <property type="match status" value="1"/>
</dbReference>
<dbReference type="SUPFAM" id="SSF57903">
    <property type="entry name" value="FYVE/PHD zinc finger"/>
    <property type="match status" value="1"/>
</dbReference>
<dbReference type="PROSITE" id="PS50330">
    <property type="entry name" value="UIM"/>
    <property type="match status" value="1"/>
</dbReference>
<dbReference type="PROSITE" id="PS50179">
    <property type="entry name" value="VHS"/>
    <property type="match status" value="1"/>
</dbReference>
<dbReference type="PROSITE" id="PS50178">
    <property type="entry name" value="ZF_FYVE"/>
    <property type="match status" value="1"/>
</dbReference>
<reference key="1">
    <citation type="journal article" date="2015" name="Genome Announc.">
        <title>Draft genome sequence of the cellulolytic fungus Chaetomium globosum.</title>
        <authorList>
            <person name="Cuomo C.A."/>
            <person name="Untereiner W.A."/>
            <person name="Ma L.-J."/>
            <person name="Grabherr M."/>
            <person name="Birren B.W."/>
        </authorList>
    </citation>
    <scope>NUCLEOTIDE SEQUENCE [LARGE SCALE GENOMIC DNA]</scope>
    <source>
        <strain>ATCC 6205 / CBS 148.51 / DSM 1962 / NBRC 6347 / NRRL 1970</strain>
    </source>
</reference>
<comment type="function">
    <text evidence="1">Component of the ESCRT-0 complex which is the sorting receptor for ubiquitinated cargo proteins at the multivesicular body (MVB) and recruits ESCRT-I to the MVB outer membrane.</text>
</comment>
<comment type="subunit">
    <text>Component of the ESCRT-0 complex composed of HSE1 and VPS27.</text>
</comment>
<comment type="subcellular location">
    <subcellularLocation>
        <location evidence="1">Endosome membrane</location>
        <topology evidence="1">Peripheral membrane protein</topology>
        <orientation evidence="1">Cytoplasmic side</orientation>
    </subcellularLocation>
</comment>
<comment type="domain">
    <text>The FYVE domain is involved in the binding to phosphatidylinositol 3-phosphate (PtdIns(3)P) which is required for the association to endosomal membranes.</text>
</comment>
<comment type="domain">
    <text evidence="1">Both IUM domains are necessary for efficient binding to ubiquitin.</text>
</comment>
<comment type="similarity">
    <text evidence="6">Belongs to the VPS27 family.</text>
</comment>
<comment type="sequence caution" evidence="6">
    <conflict type="erroneous gene model prediction">
        <sequence resource="EMBL-CDS" id="EAQ85207"/>
    </conflict>
</comment>
<comment type="sequence caution" evidence="6">
    <conflict type="frameshift">
        <sequence resource="EMBL-CDS" id="EAQ85207"/>
    </conflict>
</comment>
<name>VPS27_CHAGB</name>
<proteinExistence type="inferred from homology"/>
<keyword id="KW-0967">Endosome</keyword>
<keyword id="KW-0472">Membrane</keyword>
<keyword id="KW-0479">Metal-binding</keyword>
<keyword id="KW-1185">Reference proteome</keyword>
<keyword id="KW-0677">Repeat</keyword>
<keyword id="KW-0862">Zinc</keyword>
<keyword id="KW-0863">Zinc-finger</keyword>
<gene>
    <name type="primary">VPS27</name>
    <name type="ORF">CHGG_09221</name>
</gene>